<accession>A7ZQ07</accession>
<feature type="chain" id="PRO_1000057668" description="Holo-[acyl-carrier-protein] synthase">
    <location>
        <begin position="1"/>
        <end position="126"/>
    </location>
</feature>
<feature type="binding site" evidence="1">
    <location>
        <position position="9"/>
    </location>
    <ligand>
        <name>Mg(2+)</name>
        <dbReference type="ChEBI" id="CHEBI:18420"/>
    </ligand>
</feature>
<feature type="binding site" evidence="1">
    <location>
        <position position="58"/>
    </location>
    <ligand>
        <name>Mg(2+)</name>
        <dbReference type="ChEBI" id="CHEBI:18420"/>
    </ligand>
</feature>
<sequence>MAILGLGTDIVEIARIEAVIARSGERLARRVLSDNEWAIWKTHHQPVRFLAKRFAVKEAAAKAFGTGIRNGLAFNQFEVFNDELGKPRLRLWGEALKLAEKLGVVNMHVTLADERHYACATVIIES</sequence>
<protein>
    <recommendedName>
        <fullName evidence="1">Holo-[acyl-carrier-protein] synthase</fullName>
        <shortName evidence="1">Holo-ACP synthase</shortName>
        <ecNumber evidence="1">2.7.8.7</ecNumber>
    </recommendedName>
    <alternativeName>
        <fullName evidence="1">4'-phosphopantetheinyl transferase AcpS</fullName>
    </alternativeName>
</protein>
<gene>
    <name evidence="1" type="primary">acpS</name>
    <name type="ordered locus">EcE24377A_2849</name>
</gene>
<comment type="function">
    <text evidence="1">Transfers the 4'-phosphopantetheine moiety from coenzyme A to a Ser of acyl-carrier-protein.</text>
</comment>
<comment type="catalytic activity">
    <reaction evidence="1">
        <text>apo-[ACP] + CoA = holo-[ACP] + adenosine 3',5'-bisphosphate + H(+)</text>
        <dbReference type="Rhea" id="RHEA:12068"/>
        <dbReference type="Rhea" id="RHEA-COMP:9685"/>
        <dbReference type="Rhea" id="RHEA-COMP:9690"/>
        <dbReference type="ChEBI" id="CHEBI:15378"/>
        <dbReference type="ChEBI" id="CHEBI:29999"/>
        <dbReference type="ChEBI" id="CHEBI:57287"/>
        <dbReference type="ChEBI" id="CHEBI:58343"/>
        <dbReference type="ChEBI" id="CHEBI:64479"/>
        <dbReference type="EC" id="2.7.8.7"/>
    </reaction>
</comment>
<comment type="cofactor">
    <cofactor evidence="1">
        <name>Mg(2+)</name>
        <dbReference type="ChEBI" id="CHEBI:18420"/>
    </cofactor>
</comment>
<comment type="subcellular location">
    <subcellularLocation>
        <location evidence="1">Cytoplasm</location>
    </subcellularLocation>
</comment>
<comment type="similarity">
    <text evidence="1">Belongs to the P-Pant transferase superfamily. AcpS family.</text>
</comment>
<name>ACPS_ECO24</name>
<dbReference type="EC" id="2.7.8.7" evidence="1"/>
<dbReference type="EMBL" id="CP000800">
    <property type="protein sequence ID" value="ABV16959.1"/>
    <property type="molecule type" value="Genomic_DNA"/>
</dbReference>
<dbReference type="RefSeq" id="WP_000986029.1">
    <property type="nucleotide sequence ID" value="NC_009801.1"/>
</dbReference>
<dbReference type="SMR" id="A7ZQ07"/>
<dbReference type="GeneID" id="93774528"/>
<dbReference type="KEGG" id="ecw:EcE24377A_2849"/>
<dbReference type="HOGENOM" id="CLU_089696_3_1_6"/>
<dbReference type="Proteomes" id="UP000001122">
    <property type="component" value="Chromosome"/>
</dbReference>
<dbReference type="GO" id="GO:0005737">
    <property type="term" value="C:cytoplasm"/>
    <property type="evidence" value="ECO:0007669"/>
    <property type="project" value="UniProtKB-SubCell"/>
</dbReference>
<dbReference type="GO" id="GO:0008897">
    <property type="term" value="F:holo-[acyl-carrier-protein] synthase activity"/>
    <property type="evidence" value="ECO:0007669"/>
    <property type="project" value="UniProtKB-UniRule"/>
</dbReference>
<dbReference type="GO" id="GO:0000287">
    <property type="term" value="F:magnesium ion binding"/>
    <property type="evidence" value="ECO:0007669"/>
    <property type="project" value="UniProtKB-UniRule"/>
</dbReference>
<dbReference type="GO" id="GO:0006633">
    <property type="term" value="P:fatty acid biosynthetic process"/>
    <property type="evidence" value="ECO:0007669"/>
    <property type="project" value="UniProtKB-UniRule"/>
</dbReference>
<dbReference type="FunFam" id="3.90.470.20:FF:000001">
    <property type="entry name" value="Holo-[acyl-carrier-protein] synthase"/>
    <property type="match status" value="1"/>
</dbReference>
<dbReference type="Gene3D" id="3.90.470.20">
    <property type="entry name" value="4'-phosphopantetheinyl transferase domain"/>
    <property type="match status" value="1"/>
</dbReference>
<dbReference type="HAMAP" id="MF_00101">
    <property type="entry name" value="AcpS"/>
    <property type="match status" value="1"/>
</dbReference>
<dbReference type="InterPro" id="IPR008278">
    <property type="entry name" value="4-PPantetheinyl_Trfase_dom"/>
</dbReference>
<dbReference type="InterPro" id="IPR037143">
    <property type="entry name" value="4-PPantetheinyl_Trfase_dom_sf"/>
</dbReference>
<dbReference type="InterPro" id="IPR002582">
    <property type="entry name" value="ACPS"/>
</dbReference>
<dbReference type="InterPro" id="IPR004568">
    <property type="entry name" value="Ppantetheine-prot_Trfase_dom"/>
</dbReference>
<dbReference type="NCBIfam" id="TIGR00516">
    <property type="entry name" value="acpS"/>
    <property type="match status" value="1"/>
</dbReference>
<dbReference type="NCBIfam" id="TIGR00556">
    <property type="entry name" value="pantethn_trn"/>
    <property type="match status" value="1"/>
</dbReference>
<dbReference type="Pfam" id="PF01648">
    <property type="entry name" value="ACPS"/>
    <property type="match status" value="1"/>
</dbReference>
<dbReference type="SUPFAM" id="SSF56214">
    <property type="entry name" value="4'-phosphopantetheinyl transferase"/>
    <property type="match status" value="1"/>
</dbReference>
<reference key="1">
    <citation type="journal article" date="2008" name="J. Bacteriol.">
        <title>The pangenome structure of Escherichia coli: comparative genomic analysis of E. coli commensal and pathogenic isolates.</title>
        <authorList>
            <person name="Rasko D.A."/>
            <person name="Rosovitz M.J."/>
            <person name="Myers G.S.A."/>
            <person name="Mongodin E.F."/>
            <person name="Fricke W.F."/>
            <person name="Gajer P."/>
            <person name="Crabtree J."/>
            <person name="Sebaihia M."/>
            <person name="Thomson N.R."/>
            <person name="Chaudhuri R."/>
            <person name="Henderson I.R."/>
            <person name="Sperandio V."/>
            <person name="Ravel J."/>
        </authorList>
    </citation>
    <scope>NUCLEOTIDE SEQUENCE [LARGE SCALE GENOMIC DNA]</scope>
    <source>
        <strain>E24377A / ETEC</strain>
    </source>
</reference>
<keyword id="KW-0963">Cytoplasm</keyword>
<keyword id="KW-0275">Fatty acid biosynthesis</keyword>
<keyword id="KW-0276">Fatty acid metabolism</keyword>
<keyword id="KW-0444">Lipid biosynthesis</keyword>
<keyword id="KW-0443">Lipid metabolism</keyword>
<keyword id="KW-0460">Magnesium</keyword>
<keyword id="KW-0479">Metal-binding</keyword>
<keyword id="KW-1185">Reference proteome</keyword>
<keyword id="KW-0808">Transferase</keyword>
<proteinExistence type="inferred from homology"/>
<evidence type="ECO:0000255" key="1">
    <source>
        <dbReference type="HAMAP-Rule" id="MF_00101"/>
    </source>
</evidence>
<organism>
    <name type="scientific">Escherichia coli O139:H28 (strain E24377A / ETEC)</name>
    <dbReference type="NCBI Taxonomy" id="331111"/>
    <lineage>
        <taxon>Bacteria</taxon>
        <taxon>Pseudomonadati</taxon>
        <taxon>Pseudomonadota</taxon>
        <taxon>Gammaproteobacteria</taxon>
        <taxon>Enterobacterales</taxon>
        <taxon>Enterobacteriaceae</taxon>
        <taxon>Escherichia</taxon>
    </lineage>
</organism>